<proteinExistence type="inferred from homology"/>
<organism>
    <name type="scientific">Bartonella henselae (strain ATCC 49882 / DSM 28221 / CCUG 30454 / Houston 1)</name>
    <name type="common">Rochalimaea henselae</name>
    <dbReference type="NCBI Taxonomy" id="283166"/>
    <lineage>
        <taxon>Bacteria</taxon>
        <taxon>Pseudomonadati</taxon>
        <taxon>Pseudomonadota</taxon>
        <taxon>Alphaproteobacteria</taxon>
        <taxon>Hyphomicrobiales</taxon>
        <taxon>Bartonellaceae</taxon>
        <taxon>Bartonella</taxon>
    </lineage>
</organism>
<feature type="chain" id="PRO_1000003689" description="Nucleoid-associated protein BH02310">
    <location>
        <begin position="1"/>
        <end position="108"/>
    </location>
</feature>
<keyword id="KW-0963">Cytoplasm</keyword>
<keyword id="KW-0238">DNA-binding</keyword>
<name>Y231_BARHE</name>
<reference key="1">
    <citation type="journal article" date="2004" name="Proc. Natl. Acad. Sci. U.S.A.">
        <title>The louse-borne human pathogen Bartonella quintana is a genomic derivative of the zoonotic agent Bartonella henselae.</title>
        <authorList>
            <person name="Alsmark U.C.M."/>
            <person name="Frank A.C."/>
            <person name="Karlberg E.O."/>
            <person name="Legault B.-A."/>
            <person name="Ardell D.H."/>
            <person name="Canbaeck B."/>
            <person name="Eriksson A.-S."/>
            <person name="Naeslund A.K."/>
            <person name="Handley S.A."/>
            <person name="Huvet M."/>
            <person name="La Scola B."/>
            <person name="Holmberg M."/>
            <person name="Andersson S.G.E."/>
        </authorList>
    </citation>
    <scope>NUCLEOTIDE SEQUENCE [LARGE SCALE GENOMIC DNA]</scope>
    <source>
        <strain>ATCC 49882 / DSM 28221 / CCUG 30454 / Houston 1</strain>
    </source>
</reference>
<dbReference type="EMBL" id="BX897699">
    <property type="protein sequence ID" value="CAF27043.1"/>
    <property type="molecule type" value="Genomic_DNA"/>
</dbReference>
<dbReference type="RefSeq" id="WP_011180182.1">
    <property type="nucleotide sequence ID" value="NC_005956.1"/>
</dbReference>
<dbReference type="SMR" id="Q6G4V1"/>
<dbReference type="PaxDb" id="283166-BH02310"/>
<dbReference type="EnsemblBacteria" id="CAF27043">
    <property type="protein sequence ID" value="CAF27043"/>
    <property type="gene ID" value="BH02310"/>
</dbReference>
<dbReference type="GeneID" id="92984898"/>
<dbReference type="KEGG" id="bhe:BH02310"/>
<dbReference type="eggNOG" id="COG0718">
    <property type="taxonomic scope" value="Bacteria"/>
</dbReference>
<dbReference type="OrthoDB" id="9803080at2"/>
<dbReference type="Proteomes" id="UP000000421">
    <property type="component" value="Chromosome"/>
</dbReference>
<dbReference type="GO" id="GO:0043590">
    <property type="term" value="C:bacterial nucleoid"/>
    <property type="evidence" value="ECO:0007669"/>
    <property type="project" value="UniProtKB-UniRule"/>
</dbReference>
<dbReference type="GO" id="GO:0005829">
    <property type="term" value="C:cytosol"/>
    <property type="evidence" value="ECO:0007669"/>
    <property type="project" value="TreeGrafter"/>
</dbReference>
<dbReference type="GO" id="GO:0003677">
    <property type="term" value="F:DNA binding"/>
    <property type="evidence" value="ECO:0007669"/>
    <property type="project" value="UniProtKB-UniRule"/>
</dbReference>
<dbReference type="Gene3D" id="3.30.1310.10">
    <property type="entry name" value="Nucleoid-associated protein YbaB-like domain"/>
    <property type="match status" value="1"/>
</dbReference>
<dbReference type="HAMAP" id="MF_00274">
    <property type="entry name" value="DNA_YbaB_EbfC"/>
    <property type="match status" value="1"/>
</dbReference>
<dbReference type="InterPro" id="IPR036894">
    <property type="entry name" value="YbaB-like_sf"/>
</dbReference>
<dbReference type="InterPro" id="IPR004401">
    <property type="entry name" value="YbaB/EbfC"/>
</dbReference>
<dbReference type="NCBIfam" id="TIGR00103">
    <property type="entry name" value="DNA_YbaB_EbfC"/>
    <property type="match status" value="1"/>
</dbReference>
<dbReference type="PANTHER" id="PTHR33449">
    <property type="entry name" value="NUCLEOID-ASSOCIATED PROTEIN YBAB"/>
    <property type="match status" value="1"/>
</dbReference>
<dbReference type="PANTHER" id="PTHR33449:SF1">
    <property type="entry name" value="NUCLEOID-ASSOCIATED PROTEIN YBAB"/>
    <property type="match status" value="1"/>
</dbReference>
<dbReference type="Pfam" id="PF02575">
    <property type="entry name" value="YbaB_DNA_bd"/>
    <property type="match status" value="1"/>
</dbReference>
<dbReference type="PIRSF" id="PIRSF004555">
    <property type="entry name" value="UCP004555"/>
    <property type="match status" value="1"/>
</dbReference>
<dbReference type="SUPFAM" id="SSF82607">
    <property type="entry name" value="YbaB-like"/>
    <property type="match status" value="1"/>
</dbReference>
<evidence type="ECO:0000255" key="1">
    <source>
        <dbReference type="HAMAP-Rule" id="MF_00274"/>
    </source>
</evidence>
<comment type="function">
    <text evidence="1">Binds to DNA and alters its conformation. May be involved in regulation of gene expression, nucleoid organization and DNA protection.</text>
</comment>
<comment type="subunit">
    <text evidence="1">Homodimer.</text>
</comment>
<comment type="subcellular location">
    <subcellularLocation>
        <location evidence="1">Cytoplasm</location>
        <location evidence="1">Nucleoid</location>
    </subcellularLocation>
</comment>
<comment type="similarity">
    <text evidence="1">Belongs to the YbaB/EbfC family.</text>
</comment>
<sequence length="108" mass="12016">MRDMMNMMKKAKEMQEKMQKIQEEMANLQVTGTAGGGLVSITLNGKNTITAIKIDPSLLKPEEIEILEDLIMAAYNEAKTKIEIAMQEKTKSMTAGLPLPPDFKLPFS</sequence>
<gene>
    <name type="ordered locus">BH02310</name>
</gene>
<protein>
    <recommendedName>
        <fullName evidence="1">Nucleoid-associated protein BH02310</fullName>
    </recommendedName>
</protein>
<accession>Q6G4V1</accession>